<dbReference type="EMBL" id="AF008220">
    <property type="protein sequence ID" value="AAC00221.1"/>
    <property type="molecule type" value="Genomic_DNA"/>
</dbReference>
<dbReference type="EMBL" id="AL009126">
    <property type="protein sequence ID" value="CAB15067.1"/>
    <property type="molecule type" value="Genomic_DNA"/>
</dbReference>
<dbReference type="EMBL" id="D31847">
    <property type="status" value="NOT_ANNOTATED_CDS"/>
    <property type="molecule type" value="Genomic_DNA"/>
</dbReference>
<dbReference type="PIR" id="B70004">
    <property type="entry name" value="B70004"/>
</dbReference>
<dbReference type="RefSeq" id="WP_004399071.1">
    <property type="nucleotide sequence ID" value="NZ_OZ025638.1"/>
</dbReference>
<dbReference type="SMR" id="P46916"/>
<dbReference type="FunCoup" id="P46916">
    <property type="interactions" value="160"/>
</dbReference>
<dbReference type="STRING" id="224308.BSU30890"/>
<dbReference type="PaxDb" id="224308-BSU30890"/>
<dbReference type="EnsemblBacteria" id="CAB15067">
    <property type="protein sequence ID" value="CAB15067"/>
    <property type="gene ID" value="BSU_30890"/>
</dbReference>
<dbReference type="GeneID" id="936317"/>
<dbReference type="KEGG" id="bsu:BSU30890"/>
<dbReference type="PATRIC" id="fig|224308.179.peg.3348"/>
<dbReference type="InParanoid" id="P46916"/>
<dbReference type="OrthoDB" id="2990278at2"/>
<dbReference type="BioCyc" id="BSUB:BSU30890-MONOMER"/>
<dbReference type="Proteomes" id="UP000001570">
    <property type="component" value="Chromosome"/>
</dbReference>
<keyword id="KW-1185">Reference proteome</keyword>
<name>YTXO_BACSU</name>
<gene>
    <name type="primary">ytxO</name>
    <name type="synonym">ytbB</name>
    <name type="ordered locus">BSU30890</name>
</gene>
<proteinExistence type="predicted"/>
<organism>
    <name type="scientific">Bacillus subtilis (strain 168)</name>
    <dbReference type="NCBI Taxonomy" id="224308"/>
    <lineage>
        <taxon>Bacteria</taxon>
        <taxon>Bacillati</taxon>
        <taxon>Bacillota</taxon>
        <taxon>Bacilli</taxon>
        <taxon>Bacillales</taxon>
        <taxon>Bacillaceae</taxon>
        <taxon>Bacillus</taxon>
    </lineage>
</organism>
<feature type="chain" id="PRO_0000049908" description="Uncharacterized protein YtxO">
    <location>
        <begin position="1"/>
        <end position="143"/>
    </location>
</feature>
<feature type="region of interest" description="Disordered" evidence="1">
    <location>
        <begin position="1"/>
        <end position="143"/>
    </location>
</feature>
<feature type="compositionally biased region" description="Basic and acidic residues" evidence="1">
    <location>
        <begin position="34"/>
        <end position="46"/>
    </location>
</feature>
<feature type="compositionally biased region" description="Basic and acidic residues" evidence="1">
    <location>
        <begin position="61"/>
        <end position="76"/>
    </location>
</feature>
<feature type="compositionally biased region" description="Acidic residues" evidence="1">
    <location>
        <begin position="77"/>
        <end position="93"/>
    </location>
</feature>
<feature type="compositionally biased region" description="Acidic residues" evidence="1">
    <location>
        <begin position="103"/>
        <end position="115"/>
    </location>
</feature>
<sequence length="143" mass="16553">MRSSRQKASISKLDLDQFVFTPPGPMGWQAHDSISAEKEEEEKHLDVGSIRELPHINAPKEYQKETKEKETDRKIVDDEEETKFETTLEPEEERDSKRSAPPYEEEDEDEEPDLAEEAKVEIIILPSESKPAPWFSQTVKRKA</sequence>
<reference key="1">
    <citation type="journal article" date="1997" name="Microbiology">
        <title>Sequencing and functional annotation of the Bacillus subtilis genes in the 200 kb rrnB-dnaB region.</title>
        <authorList>
            <person name="Lapidus A."/>
            <person name="Galleron N."/>
            <person name="Sorokin A."/>
            <person name="Ehrlich S.D."/>
        </authorList>
    </citation>
    <scope>NUCLEOTIDE SEQUENCE [GENOMIC DNA]</scope>
    <source>
        <strain>168</strain>
    </source>
</reference>
<reference key="2">
    <citation type="journal article" date="1997" name="Nature">
        <title>The complete genome sequence of the Gram-positive bacterium Bacillus subtilis.</title>
        <authorList>
            <person name="Kunst F."/>
            <person name="Ogasawara N."/>
            <person name="Moszer I."/>
            <person name="Albertini A.M."/>
            <person name="Alloni G."/>
            <person name="Azevedo V."/>
            <person name="Bertero M.G."/>
            <person name="Bessieres P."/>
            <person name="Bolotin A."/>
            <person name="Borchert S."/>
            <person name="Borriss R."/>
            <person name="Boursier L."/>
            <person name="Brans A."/>
            <person name="Braun M."/>
            <person name="Brignell S.C."/>
            <person name="Bron S."/>
            <person name="Brouillet S."/>
            <person name="Bruschi C.V."/>
            <person name="Caldwell B."/>
            <person name="Capuano V."/>
            <person name="Carter N.M."/>
            <person name="Choi S.-K."/>
            <person name="Codani J.-J."/>
            <person name="Connerton I.F."/>
            <person name="Cummings N.J."/>
            <person name="Daniel R.A."/>
            <person name="Denizot F."/>
            <person name="Devine K.M."/>
            <person name="Duesterhoeft A."/>
            <person name="Ehrlich S.D."/>
            <person name="Emmerson P.T."/>
            <person name="Entian K.-D."/>
            <person name="Errington J."/>
            <person name="Fabret C."/>
            <person name="Ferrari E."/>
            <person name="Foulger D."/>
            <person name="Fritz C."/>
            <person name="Fujita M."/>
            <person name="Fujita Y."/>
            <person name="Fuma S."/>
            <person name="Galizzi A."/>
            <person name="Galleron N."/>
            <person name="Ghim S.-Y."/>
            <person name="Glaser P."/>
            <person name="Goffeau A."/>
            <person name="Golightly E.J."/>
            <person name="Grandi G."/>
            <person name="Guiseppi G."/>
            <person name="Guy B.J."/>
            <person name="Haga K."/>
            <person name="Haiech J."/>
            <person name="Harwood C.R."/>
            <person name="Henaut A."/>
            <person name="Hilbert H."/>
            <person name="Holsappel S."/>
            <person name="Hosono S."/>
            <person name="Hullo M.-F."/>
            <person name="Itaya M."/>
            <person name="Jones L.-M."/>
            <person name="Joris B."/>
            <person name="Karamata D."/>
            <person name="Kasahara Y."/>
            <person name="Klaerr-Blanchard M."/>
            <person name="Klein C."/>
            <person name="Kobayashi Y."/>
            <person name="Koetter P."/>
            <person name="Koningstein G."/>
            <person name="Krogh S."/>
            <person name="Kumano M."/>
            <person name="Kurita K."/>
            <person name="Lapidus A."/>
            <person name="Lardinois S."/>
            <person name="Lauber J."/>
            <person name="Lazarevic V."/>
            <person name="Lee S.-M."/>
            <person name="Levine A."/>
            <person name="Liu H."/>
            <person name="Masuda S."/>
            <person name="Mauel C."/>
            <person name="Medigue C."/>
            <person name="Medina N."/>
            <person name="Mellado R.P."/>
            <person name="Mizuno M."/>
            <person name="Moestl D."/>
            <person name="Nakai S."/>
            <person name="Noback M."/>
            <person name="Noone D."/>
            <person name="O'Reilly M."/>
            <person name="Ogawa K."/>
            <person name="Ogiwara A."/>
            <person name="Oudega B."/>
            <person name="Park S.-H."/>
            <person name="Parro V."/>
            <person name="Pohl T.M."/>
            <person name="Portetelle D."/>
            <person name="Porwollik S."/>
            <person name="Prescott A.M."/>
            <person name="Presecan E."/>
            <person name="Pujic P."/>
            <person name="Purnelle B."/>
            <person name="Rapoport G."/>
            <person name="Rey M."/>
            <person name="Reynolds S."/>
            <person name="Rieger M."/>
            <person name="Rivolta C."/>
            <person name="Rocha E."/>
            <person name="Roche B."/>
            <person name="Rose M."/>
            <person name="Sadaie Y."/>
            <person name="Sato T."/>
            <person name="Scanlan E."/>
            <person name="Schleich S."/>
            <person name="Schroeter R."/>
            <person name="Scoffone F."/>
            <person name="Sekiguchi J."/>
            <person name="Sekowska A."/>
            <person name="Seror S.J."/>
            <person name="Serror P."/>
            <person name="Shin B.-S."/>
            <person name="Soldo B."/>
            <person name="Sorokin A."/>
            <person name="Tacconi E."/>
            <person name="Takagi T."/>
            <person name="Takahashi H."/>
            <person name="Takemaru K."/>
            <person name="Takeuchi M."/>
            <person name="Tamakoshi A."/>
            <person name="Tanaka T."/>
            <person name="Terpstra P."/>
            <person name="Tognoni A."/>
            <person name="Tosato V."/>
            <person name="Uchiyama S."/>
            <person name="Vandenbol M."/>
            <person name="Vannier F."/>
            <person name="Vassarotti A."/>
            <person name="Viari A."/>
            <person name="Wambutt R."/>
            <person name="Wedler E."/>
            <person name="Wedler H."/>
            <person name="Weitzenegger T."/>
            <person name="Winters P."/>
            <person name="Wipat A."/>
            <person name="Yamamoto H."/>
            <person name="Yamane K."/>
            <person name="Yasumoto K."/>
            <person name="Yata K."/>
            <person name="Yoshida K."/>
            <person name="Yoshikawa H.-F."/>
            <person name="Zumstein E."/>
            <person name="Yoshikawa H."/>
            <person name="Danchin A."/>
        </authorList>
    </citation>
    <scope>NUCLEOTIDE SEQUENCE [LARGE SCALE GENOMIC DNA]</scope>
    <source>
        <strain>168</strain>
    </source>
</reference>
<reference key="3">
    <citation type="journal article" date="1995" name="Microbiology">
        <title>A Bacillus subtilis spore coat polypeptide gene, cotS.</title>
        <authorList>
            <person name="Abe A."/>
            <person name="Koide H."/>
            <person name="Kohno T."/>
            <person name="Watabe K."/>
        </authorList>
    </citation>
    <scope>NUCLEOTIDE SEQUENCE [GENOMIC DNA] OF 1-53</scope>
    <source>
        <strain>168 / 60015</strain>
    </source>
</reference>
<protein>
    <recommendedName>
        <fullName>Uncharacterized protein YtxO</fullName>
    </recommendedName>
    <alternativeName>
        <fullName>ORFY</fullName>
    </alternativeName>
</protein>
<evidence type="ECO:0000256" key="1">
    <source>
        <dbReference type="SAM" id="MobiDB-lite"/>
    </source>
</evidence>
<accession>P46916</accession>